<evidence type="ECO:0000255" key="1">
    <source>
        <dbReference type="HAMAP-Rule" id="MF_01341"/>
    </source>
</evidence>
<evidence type="ECO:0000256" key="2">
    <source>
        <dbReference type="SAM" id="MobiDB-lite"/>
    </source>
</evidence>
<evidence type="ECO:0000305" key="3"/>
<name>RL15_METMP</name>
<gene>
    <name evidence="1" type="primary">rpl15</name>
    <name type="ordered locus">MMP1421</name>
</gene>
<feature type="chain" id="PRO_0000104864" description="Large ribosomal subunit protein uL15">
    <location>
        <begin position="1"/>
        <end position="143"/>
    </location>
</feature>
<feature type="region of interest" description="Disordered" evidence="2">
    <location>
        <begin position="1"/>
        <end position="38"/>
    </location>
</feature>
<feature type="compositionally biased region" description="Basic residues" evidence="2">
    <location>
        <begin position="1"/>
        <end position="14"/>
    </location>
</feature>
<feature type="compositionally biased region" description="Basic residues" evidence="2">
    <location>
        <begin position="23"/>
        <end position="38"/>
    </location>
</feature>
<comment type="function">
    <text evidence="1">Binds to the 23S rRNA.</text>
</comment>
<comment type="subunit">
    <text evidence="1">Part of the 50S ribosomal subunit.</text>
</comment>
<comment type="similarity">
    <text evidence="1">Belongs to the universal ribosomal protein uL15 family.</text>
</comment>
<proteinExistence type="inferred from homology"/>
<reference key="1">
    <citation type="journal article" date="2004" name="J. Bacteriol.">
        <title>Complete genome sequence of the genetically tractable hydrogenotrophic methanogen Methanococcus maripaludis.</title>
        <authorList>
            <person name="Hendrickson E.L."/>
            <person name="Kaul R."/>
            <person name="Zhou Y."/>
            <person name="Bovee D."/>
            <person name="Chapman P."/>
            <person name="Chung J."/>
            <person name="Conway de Macario E."/>
            <person name="Dodsworth J.A."/>
            <person name="Gillett W."/>
            <person name="Graham D.E."/>
            <person name="Hackett M."/>
            <person name="Haydock A.K."/>
            <person name="Kang A."/>
            <person name="Land M.L."/>
            <person name="Levy R."/>
            <person name="Lie T.J."/>
            <person name="Major T.A."/>
            <person name="Moore B.C."/>
            <person name="Porat I."/>
            <person name="Palmeiri A."/>
            <person name="Rouse G."/>
            <person name="Saenphimmachak C."/>
            <person name="Soell D."/>
            <person name="Van Dien S."/>
            <person name="Wang T."/>
            <person name="Whitman W.B."/>
            <person name="Xia Q."/>
            <person name="Zhang Y."/>
            <person name="Larimer F.W."/>
            <person name="Olson M.V."/>
            <person name="Leigh J.A."/>
        </authorList>
    </citation>
    <scope>NUCLEOTIDE SEQUENCE [LARGE SCALE GENOMIC DNA]</scope>
    <source>
        <strain>DSM 14266 / JCM 13030 / NBRC 101832 / S2 / LL</strain>
    </source>
</reference>
<dbReference type="EMBL" id="BX950229">
    <property type="protein sequence ID" value="CAF30977.1"/>
    <property type="molecule type" value="Genomic_DNA"/>
</dbReference>
<dbReference type="RefSeq" id="WP_011171365.1">
    <property type="nucleotide sequence ID" value="NC_005791.1"/>
</dbReference>
<dbReference type="SMR" id="Q6LXD1"/>
<dbReference type="STRING" id="267377.MMP1421"/>
<dbReference type="EnsemblBacteria" id="CAF30977">
    <property type="protein sequence ID" value="CAF30977"/>
    <property type="gene ID" value="MMP1421"/>
</dbReference>
<dbReference type="KEGG" id="mmp:MMP1421"/>
<dbReference type="PATRIC" id="fig|267377.15.peg.1457"/>
<dbReference type="eggNOG" id="arCOG00779">
    <property type="taxonomic scope" value="Archaea"/>
</dbReference>
<dbReference type="HOGENOM" id="CLU_109163_0_0_2"/>
<dbReference type="OrthoDB" id="9418at2157"/>
<dbReference type="Proteomes" id="UP000000590">
    <property type="component" value="Chromosome"/>
</dbReference>
<dbReference type="GO" id="GO:0022625">
    <property type="term" value="C:cytosolic large ribosomal subunit"/>
    <property type="evidence" value="ECO:0007669"/>
    <property type="project" value="TreeGrafter"/>
</dbReference>
<dbReference type="GO" id="GO:0019843">
    <property type="term" value="F:rRNA binding"/>
    <property type="evidence" value="ECO:0007669"/>
    <property type="project" value="UniProtKB-UniRule"/>
</dbReference>
<dbReference type="GO" id="GO:0003735">
    <property type="term" value="F:structural constituent of ribosome"/>
    <property type="evidence" value="ECO:0007669"/>
    <property type="project" value="InterPro"/>
</dbReference>
<dbReference type="GO" id="GO:0006412">
    <property type="term" value="P:translation"/>
    <property type="evidence" value="ECO:0007669"/>
    <property type="project" value="UniProtKB-UniRule"/>
</dbReference>
<dbReference type="Gene3D" id="3.100.10.10">
    <property type="match status" value="1"/>
</dbReference>
<dbReference type="Gene3D" id="4.10.990.10">
    <property type="match status" value="1"/>
</dbReference>
<dbReference type="HAMAP" id="MF_01341">
    <property type="entry name" value="Ribosomal_uL15"/>
    <property type="match status" value="1"/>
</dbReference>
<dbReference type="InterPro" id="IPR027386">
    <property type="entry name" value="Rbsml_uL15_N"/>
</dbReference>
<dbReference type="InterPro" id="IPR030878">
    <property type="entry name" value="Ribosomal_uL15"/>
</dbReference>
<dbReference type="InterPro" id="IPR021131">
    <property type="entry name" value="Ribosomal_uL15/eL18"/>
</dbReference>
<dbReference type="InterPro" id="IPR036227">
    <property type="entry name" value="Ribosomal_uL15/eL18_sf"/>
</dbReference>
<dbReference type="InterPro" id="IPR001196">
    <property type="entry name" value="Ribosomal_uL15_CS"/>
</dbReference>
<dbReference type="PANTHER" id="PTHR11721">
    <property type="entry name" value="60S RIBOSOMAL PROTEIN L27A"/>
    <property type="match status" value="1"/>
</dbReference>
<dbReference type="PANTHER" id="PTHR11721:SF3">
    <property type="entry name" value="LARGE RIBOSOMAL SUBUNIT PROTEIN UL15"/>
    <property type="match status" value="1"/>
</dbReference>
<dbReference type="Pfam" id="PF00828">
    <property type="entry name" value="Ribosomal_L27A"/>
    <property type="match status" value="1"/>
</dbReference>
<dbReference type="SUPFAM" id="SSF52080">
    <property type="entry name" value="Ribosomal proteins L15p and L18e"/>
    <property type="match status" value="1"/>
</dbReference>
<dbReference type="PROSITE" id="PS00475">
    <property type="entry name" value="RIBOSOMAL_L15"/>
    <property type="match status" value="1"/>
</dbReference>
<accession>Q6LXD1</accession>
<sequence length="143" mass="15951">MIRKSKKITKKRGSRTCGYGEAKKHRGAGHRGGRGNAGHQKHKWLSVCKFNPDYFGKYGFNRNPCLIKQLETINIGELEEYILKYKDAFQVEEGKVVVNATEIGFEKVLGKGRISTAMVVKAVEFSEGAKEKIEAAGGEFVEL</sequence>
<keyword id="KW-1185">Reference proteome</keyword>
<keyword id="KW-0687">Ribonucleoprotein</keyword>
<keyword id="KW-0689">Ribosomal protein</keyword>
<keyword id="KW-0694">RNA-binding</keyword>
<keyword id="KW-0699">rRNA-binding</keyword>
<protein>
    <recommendedName>
        <fullName evidence="1">Large ribosomal subunit protein uL15</fullName>
    </recommendedName>
    <alternativeName>
        <fullName evidence="3">50S ribosomal protein L15</fullName>
    </alternativeName>
</protein>
<organism>
    <name type="scientific">Methanococcus maripaludis (strain DSM 14266 / JCM 13030 / NBRC 101832 / S2 / LL)</name>
    <dbReference type="NCBI Taxonomy" id="267377"/>
    <lineage>
        <taxon>Archaea</taxon>
        <taxon>Methanobacteriati</taxon>
        <taxon>Methanobacteriota</taxon>
        <taxon>Methanomada group</taxon>
        <taxon>Methanococci</taxon>
        <taxon>Methanococcales</taxon>
        <taxon>Methanococcaceae</taxon>
        <taxon>Methanococcus</taxon>
    </lineage>
</organism>